<feature type="initiator methionine" description="Removed" evidence="1">
    <location>
        <position position="1"/>
    </location>
</feature>
<feature type="chain" id="PRO_0000125728" description="Large ribosomal subunit protein uL1">
    <location>
        <begin position="2"/>
        <end position="234"/>
    </location>
</feature>
<keyword id="KW-0678">Repressor</keyword>
<keyword id="KW-0687">Ribonucleoprotein</keyword>
<keyword id="KW-0689">Ribosomal protein</keyword>
<keyword id="KW-0694">RNA-binding</keyword>
<keyword id="KW-0699">rRNA-binding</keyword>
<keyword id="KW-0810">Translation regulation</keyword>
<keyword id="KW-0820">tRNA-binding</keyword>
<reference key="1">
    <citation type="journal article" date="1987" name="Mol. Gen. Genet.">
        <title>Cloning and DNA sequence determination of the L11 ribosomal protein operon of Serratia marcescens and Proteus vulgaris: translational feedback regulation of the Escherichia coli L11 operon by heterologous L1 proteins.</title>
        <authorList>
            <person name="Sor F."/>
            <person name="Nomura M."/>
        </authorList>
    </citation>
    <scope>NUCLEOTIDE SEQUENCE [GENOMIC DNA]</scope>
    <source>
        <strain>NO1011</strain>
    </source>
</reference>
<comment type="function">
    <text evidence="2">Binds directly to 23S rRNA. The L1 stalk is quite mobile in the ribosome, and is involved in E site tRNA release.</text>
</comment>
<comment type="function">
    <text>Protein L1 is also a translational repressor protein, it controls the translation of the L11 operon by binding to its mRNA.</text>
</comment>
<comment type="subunit">
    <text evidence="2">Part of the 50S ribosomal subunit.</text>
</comment>
<comment type="similarity">
    <text evidence="2">Belongs to the universal ribosomal protein uL1 family.</text>
</comment>
<accession>P09764</accession>
<name>RL1_SERMA</name>
<sequence>MAKLTKRMRVIRDKVDATKQYDITEAIALLKELATAKFVESVDVAVNLGIDARKSDQNVRGATVLPHGTGRSVRVAVFTQGANAEAAKAAGAELVGMEDLAEQIKKGEMNFDVVIASPDAMRVVGQLGQISGPRGLMPNPKVGTVTPNVAEAVKNAKAGQVRYRNDKNGIIHTTIGKVDFDADKLKENLEALLVALKKAKPSQAKGMYIKKVSLSTTMGAGVAIDQSGLSAAAN</sequence>
<organism>
    <name type="scientific">Serratia marcescens</name>
    <dbReference type="NCBI Taxonomy" id="615"/>
    <lineage>
        <taxon>Bacteria</taxon>
        <taxon>Pseudomonadati</taxon>
        <taxon>Pseudomonadota</taxon>
        <taxon>Gammaproteobacteria</taxon>
        <taxon>Enterobacterales</taxon>
        <taxon>Yersiniaceae</taxon>
        <taxon>Serratia</taxon>
    </lineage>
</organism>
<dbReference type="EMBL" id="X12584">
    <property type="protein sequence ID" value="CAA31096.1"/>
    <property type="molecule type" value="Genomic_DNA"/>
</dbReference>
<dbReference type="PIR" id="S01968">
    <property type="entry name" value="R5SE1"/>
</dbReference>
<dbReference type="SMR" id="P09764"/>
<dbReference type="STRING" id="273526.SMDB11_4374"/>
<dbReference type="GO" id="GO:0022625">
    <property type="term" value="C:cytosolic large ribosomal subunit"/>
    <property type="evidence" value="ECO:0007669"/>
    <property type="project" value="TreeGrafter"/>
</dbReference>
<dbReference type="GO" id="GO:0019843">
    <property type="term" value="F:rRNA binding"/>
    <property type="evidence" value="ECO:0007669"/>
    <property type="project" value="UniProtKB-UniRule"/>
</dbReference>
<dbReference type="GO" id="GO:0003735">
    <property type="term" value="F:structural constituent of ribosome"/>
    <property type="evidence" value="ECO:0007669"/>
    <property type="project" value="InterPro"/>
</dbReference>
<dbReference type="GO" id="GO:0000049">
    <property type="term" value="F:tRNA binding"/>
    <property type="evidence" value="ECO:0007669"/>
    <property type="project" value="UniProtKB-KW"/>
</dbReference>
<dbReference type="GO" id="GO:0006417">
    <property type="term" value="P:regulation of translation"/>
    <property type="evidence" value="ECO:0007669"/>
    <property type="project" value="UniProtKB-KW"/>
</dbReference>
<dbReference type="GO" id="GO:0006412">
    <property type="term" value="P:translation"/>
    <property type="evidence" value="ECO:0007669"/>
    <property type="project" value="UniProtKB-UniRule"/>
</dbReference>
<dbReference type="CDD" id="cd00403">
    <property type="entry name" value="Ribosomal_L1"/>
    <property type="match status" value="1"/>
</dbReference>
<dbReference type="FunFam" id="3.40.50.790:FF:000001">
    <property type="entry name" value="50S ribosomal protein L1"/>
    <property type="match status" value="1"/>
</dbReference>
<dbReference type="Gene3D" id="3.30.190.20">
    <property type="match status" value="1"/>
</dbReference>
<dbReference type="Gene3D" id="3.40.50.790">
    <property type="match status" value="1"/>
</dbReference>
<dbReference type="HAMAP" id="MF_01318_B">
    <property type="entry name" value="Ribosomal_uL1_B"/>
    <property type="match status" value="1"/>
</dbReference>
<dbReference type="InterPro" id="IPR005878">
    <property type="entry name" value="Ribosom_uL1_bac-type"/>
</dbReference>
<dbReference type="InterPro" id="IPR002143">
    <property type="entry name" value="Ribosomal_uL1"/>
</dbReference>
<dbReference type="InterPro" id="IPR023674">
    <property type="entry name" value="Ribosomal_uL1-like"/>
</dbReference>
<dbReference type="InterPro" id="IPR028364">
    <property type="entry name" value="Ribosomal_uL1/biogenesis"/>
</dbReference>
<dbReference type="InterPro" id="IPR016095">
    <property type="entry name" value="Ribosomal_uL1_3-a/b-sand"/>
</dbReference>
<dbReference type="InterPro" id="IPR023673">
    <property type="entry name" value="Ribosomal_uL1_CS"/>
</dbReference>
<dbReference type="NCBIfam" id="TIGR01169">
    <property type="entry name" value="rplA_bact"/>
    <property type="match status" value="1"/>
</dbReference>
<dbReference type="PANTHER" id="PTHR36427">
    <property type="entry name" value="54S RIBOSOMAL PROTEIN L1, MITOCHONDRIAL"/>
    <property type="match status" value="1"/>
</dbReference>
<dbReference type="PANTHER" id="PTHR36427:SF3">
    <property type="entry name" value="LARGE RIBOSOMAL SUBUNIT PROTEIN UL1M"/>
    <property type="match status" value="1"/>
</dbReference>
<dbReference type="Pfam" id="PF00687">
    <property type="entry name" value="Ribosomal_L1"/>
    <property type="match status" value="1"/>
</dbReference>
<dbReference type="PIRSF" id="PIRSF002155">
    <property type="entry name" value="Ribosomal_L1"/>
    <property type="match status" value="1"/>
</dbReference>
<dbReference type="SUPFAM" id="SSF56808">
    <property type="entry name" value="Ribosomal protein L1"/>
    <property type="match status" value="1"/>
</dbReference>
<dbReference type="PROSITE" id="PS01199">
    <property type="entry name" value="RIBOSOMAL_L1"/>
    <property type="match status" value="1"/>
</dbReference>
<proteinExistence type="inferred from homology"/>
<evidence type="ECO:0000250" key="1"/>
<evidence type="ECO:0000255" key="2">
    <source>
        <dbReference type="HAMAP-Rule" id="MF_01318"/>
    </source>
</evidence>
<evidence type="ECO:0000305" key="3"/>
<protein>
    <recommendedName>
        <fullName evidence="2">Large ribosomal subunit protein uL1</fullName>
    </recommendedName>
    <alternativeName>
        <fullName evidence="3">50S ribosomal protein L1</fullName>
    </alternativeName>
</protein>
<gene>
    <name evidence="2" type="primary">rplA</name>
</gene>